<accession>A7MS76</accession>
<organism>
    <name type="scientific">Vibrio campbellii (strain ATCC BAA-1116)</name>
    <dbReference type="NCBI Taxonomy" id="2902295"/>
    <lineage>
        <taxon>Bacteria</taxon>
        <taxon>Pseudomonadati</taxon>
        <taxon>Pseudomonadota</taxon>
        <taxon>Gammaproteobacteria</taxon>
        <taxon>Vibrionales</taxon>
        <taxon>Vibrionaceae</taxon>
        <taxon>Vibrio</taxon>
    </lineage>
</organism>
<name>TRUA_VIBC1</name>
<comment type="function">
    <text evidence="1">Formation of pseudouridine at positions 38, 39 and 40 in the anticodon stem and loop of transfer RNAs.</text>
</comment>
<comment type="catalytic activity">
    <reaction evidence="1">
        <text>uridine(38/39/40) in tRNA = pseudouridine(38/39/40) in tRNA</text>
        <dbReference type="Rhea" id="RHEA:22376"/>
        <dbReference type="Rhea" id="RHEA-COMP:10085"/>
        <dbReference type="Rhea" id="RHEA-COMP:10087"/>
        <dbReference type="ChEBI" id="CHEBI:65314"/>
        <dbReference type="ChEBI" id="CHEBI:65315"/>
        <dbReference type="EC" id="5.4.99.12"/>
    </reaction>
</comment>
<comment type="subunit">
    <text evidence="1">Homodimer.</text>
</comment>
<comment type="similarity">
    <text evidence="1">Belongs to the tRNA pseudouridine synthase TruA family.</text>
</comment>
<proteinExistence type="inferred from homology"/>
<gene>
    <name evidence="1" type="primary">truA</name>
    <name type="ordered locus">VIBHAR_03101</name>
</gene>
<keyword id="KW-0413">Isomerase</keyword>
<keyword id="KW-0819">tRNA processing</keyword>
<protein>
    <recommendedName>
        <fullName evidence="1">tRNA pseudouridine synthase A</fullName>
        <ecNumber evidence="1">5.4.99.12</ecNumber>
    </recommendedName>
    <alternativeName>
        <fullName evidence="1">tRNA pseudouridine(38-40) synthase</fullName>
    </alternativeName>
    <alternativeName>
        <fullName evidence="1">tRNA pseudouridylate synthase I</fullName>
    </alternativeName>
    <alternativeName>
        <fullName evidence="1">tRNA-uridine isomerase I</fullName>
    </alternativeName>
</protein>
<sequence length="264" mass="29669">MRIALGIEYNGTNYFGWQRQREVKSVQEELEKALSVVANHPVEVQCAGRTDAGVHGTGQVVHFDTNVSRKMVAWTMGANANMPSDIAVRWAVEVNDDFHARFSATARRYRYIIFNHALRPGILNSGVSHYHGELDEKKMHEAGQYLLGENDFSSFRAAHCQSLSPCRNMMHLNVTRHGDYIVIDIKANAFVHHMVRNITGSLIKVGRGEEKPEWIKSLLEAKDRKLAGATAKAEGLYLVDVDYPEEFGLPRVPIGPLFLPDNLN</sequence>
<reference key="1">
    <citation type="submission" date="2007-08" db="EMBL/GenBank/DDBJ databases">
        <authorList>
            <consortium name="The Vibrio harveyi Genome Sequencing Project"/>
            <person name="Bassler B."/>
            <person name="Clifton S.W."/>
            <person name="Fulton L."/>
            <person name="Delehaunty K."/>
            <person name="Fronick C."/>
            <person name="Harrison M."/>
            <person name="Markivic C."/>
            <person name="Fulton R."/>
            <person name="Tin-Wollam A.-M."/>
            <person name="Shah N."/>
            <person name="Pepin K."/>
            <person name="Nash W."/>
            <person name="Thiruvilangam P."/>
            <person name="Bhonagiri V."/>
            <person name="Waters C."/>
            <person name="Tu K.C."/>
            <person name="Irgon J."/>
            <person name="Wilson R.K."/>
        </authorList>
    </citation>
    <scope>NUCLEOTIDE SEQUENCE [LARGE SCALE GENOMIC DNA]</scope>
    <source>
        <strain>ATCC BAA-1116 / BB120</strain>
    </source>
</reference>
<dbReference type="EC" id="5.4.99.12" evidence="1"/>
<dbReference type="EMBL" id="CP000789">
    <property type="protein sequence ID" value="ABU72050.1"/>
    <property type="molecule type" value="Genomic_DNA"/>
</dbReference>
<dbReference type="RefSeq" id="WP_005433129.1">
    <property type="nucleotide sequence ID" value="NC_022269.1"/>
</dbReference>
<dbReference type="SMR" id="A7MS76"/>
<dbReference type="GeneID" id="67376646"/>
<dbReference type="KEGG" id="vha:VIBHAR_03101"/>
<dbReference type="PATRIC" id="fig|338187.25.peg.3088"/>
<dbReference type="Proteomes" id="UP000008152">
    <property type="component" value="Chromosome I"/>
</dbReference>
<dbReference type="GO" id="GO:0003723">
    <property type="term" value="F:RNA binding"/>
    <property type="evidence" value="ECO:0007669"/>
    <property type="project" value="InterPro"/>
</dbReference>
<dbReference type="GO" id="GO:0160147">
    <property type="term" value="F:tRNA pseudouridine(38-40) synthase activity"/>
    <property type="evidence" value="ECO:0007669"/>
    <property type="project" value="UniProtKB-EC"/>
</dbReference>
<dbReference type="GO" id="GO:0031119">
    <property type="term" value="P:tRNA pseudouridine synthesis"/>
    <property type="evidence" value="ECO:0007669"/>
    <property type="project" value="UniProtKB-UniRule"/>
</dbReference>
<dbReference type="CDD" id="cd02570">
    <property type="entry name" value="PseudoU_synth_EcTruA"/>
    <property type="match status" value="1"/>
</dbReference>
<dbReference type="FunFam" id="3.30.70.580:FF:000001">
    <property type="entry name" value="tRNA pseudouridine synthase A"/>
    <property type="match status" value="1"/>
</dbReference>
<dbReference type="FunFam" id="3.30.70.660:FF:000001">
    <property type="entry name" value="tRNA pseudouridine synthase A"/>
    <property type="match status" value="1"/>
</dbReference>
<dbReference type="Gene3D" id="3.30.70.660">
    <property type="entry name" value="Pseudouridine synthase I, catalytic domain, C-terminal subdomain"/>
    <property type="match status" value="1"/>
</dbReference>
<dbReference type="Gene3D" id="3.30.70.580">
    <property type="entry name" value="Pseudouridine synthase I, catalytic domain, N-terminal subdomain"/>
    <property type="match status" value="1"/>
</dbReference>
<dbReference type="HAMAP" id="MF_00171">
    <property type="entry name" value="TruA"/>
    <property type="match status" value="1"/>
</dbReference>
<dbReference type="InterPro" id="IPR020103">
    <property type="entry name" value="PsdUridine_synth_cat_dom_sf"/>
</dbReference>
<dbReference type="InterPro" id="IPR001406">
    <property type="entry name" value="PsdUridine_synth_TruA"/>
</dbReference>
<dbReference type="InterPro" id="IPR020097">
    <property type="entry name" value="PsdUridine_synth_TruA_a/b_dom"/>
</dbReference>
<dbReference type="InterPro" id="IPR020095">
    <property type="entry name" value="PsdUridine_synth_TruA_C"/>
</dbReference>
<dbReference type="InterPro" id="IPR020094">
    <property type="entry name" value="TruA/RsuA/RluB/E/F_N"/>
</dbReference>
<dbReference type="NCBIfam" id="TIGR00071">
    <property type="entry name" value="hisT_truA"/>
    <property type="match status" value="1"/>
</dbReference>
<dbReference type="PANTHER" id="PTHR11142">
    <property type="entry name" value="PSEUDOURIDYLATE SYNTHASE"/>
    <property type="match status" value="1"/>
</dbReference>
<dbReference type="PANTHER" id="PTHR11142:SF0">
    <property type="entry name" value="TRNA PSEUDOURIDINE SYNTHASE-LIKE 1"/>
    <property type="match status" value="1"/>
</dbReference>
<dbReference type="Pfam" id="PF01416">
    <property type="entry name" value="PseudoU_synth_1"/>
    <property type="match status" value="2"/>
</dbReference>
<dbReference type="PIRSF" id="PIRSF001430">
    <property type="entry name" value="tRNA_psdUrid_synth"/>
    <property type="match status" value="1"/>
</dbReference>
<dbReference type="SUPFAM" id="SSF55120">
    <property type="entry name" value="Pseudouridine synthase"/>
    <property type="match status" value="1"/>
</dbReference>
<feature type="chain" id="PRO_1000017210" description="tRNA pseudouridine synthase A">
    <location>
        <begin position="1"/>
        <end position="264"/>
    </location>
</feature>
<feature type="active site" description="Nucleophile" evidence="1">
    <location>
        <position position="51"/>
    </location>
</feature>
<feature type="binding site" evidence="1">
    <location>
        <position position="109"/>
    </location>
    <ligand>
        <name>substrate</name>
    </ligand>
</feature>
<evidence type="ECO:0000255" key="1">
    <source>
        <dbReference type="HAMAP-Rule" id="MF_00171"/>
    </source>
</evidence>